<organism>
    <name type="scientific">Methanosarcina mazei</name>
    <name type="common">Methanosarcina frisia</name>
    <dbReference type="NCBI Taxonomy" id="2209"/>
    <lineage>
        <taxon>Archaea</taxon>
        <taxon>Methanobacteriati</taxon>
        <taxon>Methanobacteriota</taxon>
        <taxon>Stenosarchaea group</taxon>
        <taxon>Methanomicrobia</taxon>
        <taxon>Methanosarcinales</taxon>
        <taxon>Methanosarcinaceae</taxon>
        <taxon>Methanosarcina</taxon>
    </lineage>
</organism>
<evidence type="ECO:0000255" key="1">
    <source>
        <dbReference type="HAMAP-Rule" id="MF_00351"/>
    </source>
</evidence>
<accession>P0CW08</accession>
<accession>O53133</accession>
<name>FLPA_METMZ</name>
<sequence length="193" mass="21483">MPEIRQLSEGIFEVTKDKKQLSTLNLDPGKVVYGEKLISVEGDEYRTWDPRRSKLGAMVLKKFDIPLKRNSKVLYLGAASGTTVSHVSDIVSEGAVYSVEFAPRSMRDFIGLASRRKNIFPILADAGKPDSYAHIVEPVDVIFQDVAQPNQAEIAARNAVRFLKKDGYLLLSIKARSIDTAASPKEIFKEEVK</sequence>
<gene>
    <name evidence="1" type="primary">flpA</name>
    <name type="synonym">fibM</name>
</gene>
<protein>
    <recommendedName>
        <fullName evidence="1">Fibrillarin-like rRNA/tRNA 2'-O-methyltransferase</fullName>
        <ecNumber evidence="1">2.1.1.-</ecNumber>
    </recommendedName>
</protein>
<feature type="chain" id="PRO_0000148535" description="Fibrillarin-like rRNA/tRNA 2'-O-methyltransferase">
    <location>
        <begin position="1"/>
        <end position="193" status="greater than"/>
    </location>
</feature>
<feature type="binding site" evidence="1">
    <location>
        <begin position="82"/>
        <end position="83"/>
    </location>
    <ligand>
        <name>S-adenosyl-L-methionine</name>
        <dbReference type="ChEBI" id="CHEBI:59789"/>
    </ligand>
</feature>
<feature type="binding site" evidence="1">
    <location>
        <begin position="100"/>
        <end position="101"/>
    </location>
    <ligand>
        <name>S-adenosyl-L-methionine</name>
        <dbReference type="ChEBI" id="CHEBI:59789"/>
    </ligand>
</feature>
<feature type="binding site" evidence="1">
    <location>
        <begin position="125"/>
        <end position="126"/>
    </location>
    <ligand>
        <name>S-adenosyl-L-methionine</name>
        <dbReference type="ChEBI" id="CHEBI:59789"/>
    </ligand>
</feature>
<feature type="binding site" evidence="1">
    <location>
        <begin position="145"/>
        <end position="148"/>
    </location>
    <ligand>
        <name>S-adenosyl-L-methionine</name>
        <dbReference type="ChEBI" id="CHEBI:59789"/>
    </ligand>
</feature>
<feature type="non-terminal residue">
    <location>
        <position position="193"/>
    </location>
</feature>
<keyword id="KW-0489">Methyltransferase</keyword>
<keyword id="KW-0694">RNA-binding</keyword>
<keyword id="KW-0698">rRNA processing</keyword>
<keyword id="KW-0808">Transferase</keyword>
<keyword id="KW-0819">tRNA processing</keyword>
<dbReference type="EC" id="2.1.1.-" evidence="1"/>
<dbReference type="EMBL" id="Y16231">
    <property type="protein sequence ID" value="CAA76128.1"/>
    <property type="molecule type" value="Genomic_DNA"/>
</dbReference>
<dbReference type="PIR" id="T47220">
    <property type="entry name" value="T47220"/>
</dbReference>
<dbReference type="SMR" id="P0CW08"/>
<dbReference type="GO" id="GO:1990259">
    <property type="term" value="F:histone H2AQ104 methyltransferase activity"/>
    <property type="evidence" value="ECO:0007669"/>
    <property type="project" value="TreeGrafter"/>
</dbReference>
<dbReference type="GO" id="GO:0003723">
    <property type="term" value="F:RNA binding"/>
    <property type="evidence" value="ECO:0007669"/>
    <property type="project" value="UniProtKB-KW"/>
</dbReference>
<dbReference type="GO" id="GO:0008649">
    <property type="term" value="F:rRNA methyltransferase activity"/>
    <property type="evidence" value="ECO:0007669"/>
    <property type="project" value="TreeGrafter"/>
</dbReference>
<dbReference type="GO" id="GO:0000494">
    <property type="term" value="P:box C/D sno(s)RNA 3'-end processing"/>
    <property type="evidence" value="ECO:0007669"/>
    <property type="project" value="TreeGrafter"/>
</dbReference>
<dbReference type="GO" id="GO:0008033">
    <property type="term" value="P:tRNA processing"/>
    <property type="evidence" value="ECO:0007669"/>
    <property type="project" value="UniProtKB-KW"/>
</dbReference>
<dbReference type="Gene3D" id="3.30.200.20">
    <property type="entry name" value="Phosphorylase Kinase, domain 1"/>
    <property type="match status" value="1"/>
</dbReference>
<dbReference type="Gene3D" id="3.40.50.150">
    <property type="entry name" value="Vaccinia Virus protein VP39"/>
    <property type="match status" value="1"/>
</dbReference>
<dbReference type="HAMAP" id="MF_00351">
    <property type="entry name" value="RNA_methyltransf_FlpA"/>
    <property type="match status" value="1"/>
</dbReference>
<dbReference type="InterPro" id="IPR000692">
    <property type="entry name" value="Fibrillarin"/>
</dbReference>
<dbReference type="InterPro" id="IPR020813">
    <property type="entry name" value="Fibrillarin_CS"/>
</dbReference>
<dbReference type="InterPro" id="IPR029063">
    <property type="entry name" value="SAM-dependent_MTases_sf"/>
</dbReference>
<dbReference type="NCBIfam" id="NF003276">
    <property type="entry name" value="PRK04266.1-2"/>
    <property type="match status" value="1"/>
</dbReference>
<dbReference type="PANTHER" id="PTHR10335:SF17">
    <property type="entry name" value="FIBRILLARIN"/>
    <property type="match status" value="1"/>
</dbReference>
<dbReference type="PANTHER" id="PTHR10335">
    <property type="entry name" value="RRNA 2-O-METHYLTRANSFERASE FIBRILLARIN"/>
    <property type="match status" value="1"/>
</dbReference>
<dbReference type="Pfam" id="PF01269">
    <property type="entry name" value="Fibrillarin"/>
    <property type="match status" value="1"/>
</dbReference>
<dbReference type="PIRSF" id="PIRSF006540">
    <property type="entry name" value="Nop17p"/>
    <property type="match status" value="1"/>
</dbReference>
<dbReference type="PRINTS" id="PR00052">
    <property type="entry name" value="FIBRILLARIN"/>
</dbReference>
<dbReference type="SMART" id="SM01206">
    <property type="entry name" value="Fibrillarin"/>
    <property type="match status" value="1"/>
</dbReference>
<dbReference type="SUPFAM" id="SSF53335">
    <property type="entry name" value="S-adenosyl-L-methionine-dependent methyltransferases"/>
    <property type="match status" value="1"/>
</dbReference>
<dbReference type="PROSITE" id="PS00566">
    <property type="entry name" value="FIBRILLARIN"/>
    <property type="match status" value="1"/>
</dbReference>
<reference key="1">
    <citation type="journal article" date="2000" name="Gene">
        <title>Identification of genes in the genome of the archaeon Methanosarcina mazeii that code for homologs of nuclear eukaryotic molecules involved in RNA processing.</title>
        <authorList>
            <person name="Hickey A.J."/>
            <person name="Macario A.J.L."/>
            <person name="Conway de Macario E."/>
        </authorList>
    </citation>
    <scope>NUCLEOTIDE SEQUENCE [GENOMIC DNA]</scope>
    <source>
        <strain>S-6</strain>
    </source>
</reference>
<proteinExistence type="inferred from homology"/>
<comment type="function">
    <text evidence="1">Involved in pre-rRNA and tRNA processing. Utilizes the methyl donor S-adenosyl-L-methionine to catalyze the site-specific 2'-hydroxyl methylation of ribose moieties in rRNA and tRNA. Site specificity is provided by a guide RNA that base pairs with the substrate. Methylation occurs at a characteristic distance from the sequence involved in base pairing with the guide RNA.</text>
</comment>
<comment type="subunit">
    <text evidence="1">Interacts with nop5. Component of box C/D small ribonucleoprotein (sRNP) particles that contain rpl7ae, FlpA and nop5, plus a guide RNA.</text>
</comment>
<comment type="similarity">
    <text evidence="1">Belongs to the methyltransferase superfamily. Fibrillarin family.</text>
</comment>